<reference key="1">
    <citation type="submission" date="2008-12" db="EMBL/GenBank/DDBJ databases">
        <title>Complete sequence of chromosome of Methylobacterium chloromethanicum CM4.</title>
        <authorList>
            <consortium name="US DOE Joint Genome Institute"/>
            <person name="Lucas S."/>
            <person name="Copeland A."/>
            <person name="Lapidus A."/>
            <person name="Glavina del Rio T."/>
            <person name="Dalin E."/>
            <person name="Tice H."/>
            <person name="Bruce D."/>
            <person name="Goodwin L."/>
            <person name="Pitluck S."/>
            <person name="Chertkov O."/>
            <person name="Brettin T."/>
            <person name="Detter J.C."/>
            <person name="Han C."/>
            <person name="Larimer F."/>
            <person name="Land M."/>
            <person name="Hauser L."/>
            <person name="Kyrpides N."/>
            <person name="Mikhailova N."/>
            <person name="Marx C."/>
            <person name="Richardson P."/>
        </authorList>
    </citation>
    <scope>NUCLEOTIDE SEQUENCE [LARGE SCALE GENOMIC DNA]</scope>
    <source>
        <strain>CM4 / NCIMB 13688</strain>
    </source>
</reference>
<proteinExistence type="inferred from homology"/>
<feature type="chain" id="PRO_1000190616" description="Imidazoleglycerol-phosphate dehydratase">
    <location>
        <begin position="1"/>
        <end position="195"/>
    </location>
</feature>
<keyword id="KW-0028">Amino-acid biosynthesis</keyword>
<keyword id="KW-0963">Cytoplasm</keyword>
<keyword id="KW-0368">Histidine biosynthesis</keyword>
<keyword id="KW-0456">Lyase</keyword>
<evidence type="ECO:0000255" key="1">
    <source>
        <dbReference type="HAMAP-Rule" id="MF_00076"/>
    </source>
</evidence>
<protein>
    <recommendedName>
        <fullName evidence="1">Imidazoleglycerol-phosphate dehydratase</fullName>
        <shortName evidence="1">IGPD</shortName>
        <ecNumber evidence="1">4.2.1.19</ecNumber>
    </recommendedName>
</protein>
<comment type="catalytic activity">
    <reaction evidence="1">
        <text>D-erythro-1-(imidazol-4-yl)glycerol 3-phosphate = 3-(imidazol-4-yl)-2-oxopropyl phosphate + H2O</text>
        <dbReference type="Rhea" id="RHEA:11040"/>
        <dbReference type="ChEBI" id="CHEBI:15377"/>
        <dbReference type="ChEBI" id="CHEBI:57766"/>
        <dbReference type="ChEBI" id="CHEBI:58278"/>
        <dbReference type="EC" id="4.2.1.19"/>
    </reaction>
</comment>
<comment type="pathway">
    <text evidence="1">Amino-acid biosynthesis; L-histidine biosynthesis; L-histidine from 5-phospho-alpha-D-ribose 1-diphosphate: step 6/9.</text>
</comment>
<comment type="subcellular location">
    <subcellularLocation>
        <location evidence="1">Cytoplasm</location>
    </subcellularLocation>
</comment>
<comment type="similarity">
    <text evidence="1">Belongs to the imidazoleglycerol-phosphate dehydratase family.</text>
</comment>
<dbReference type="EC" id="4.2.1.19" evidence="1"/>
<dbReference type="EMBL" id="CP001298">
    <property type="protein sequence ID" value="ACK83610.1"/>
    <property type="molecule type" value="Genomic_DNA"/>
</dbReference>
<dbReference type="RefSeq" id="WP_015951082.1">
    <property type="nucleotide sequence ID" value="NC_011757.1"/>
</dbReference>
<dbReference type="SMR" id="B7KPM4"/>
<dbReference type="KEGG" id="mch:Mchl_2771"/>
<dbReference type="HOGENOM" id="CLU_044308_2_0_5"/>
<dbReference type="UniPathway" id="UPA00031">
    <property type="reaction ID" value="UER00011"/>
</dbReference>
<dbReference type="Proteomes" id="UP000002385">
    <property type="component" value="Chromosome"/>
</dbReference>
<dbReference type="GO" id="GO:0005737">
    <property type="term" value="C:cytoplasm"/>
    <property type="evidence" value="ECO:0007669"/>
    <property type="project" value="UniProtKB-SubCell"/>
</dbReference>
<dbReference type="GO" id="GO:0004424">
    <property type="term" value="F:imidazoleglycerol-phosphate dehydratase activity"/>
    <property type="evidence" value="ECO:0007669"/>
    <property type="project" value="UniProtKB-UniRule"/>
</dbReference>
<dbReference type="GO" id="GO:0000105">
    <property type="term" value="P:L-histidine biosynthetic process"/>
    <property type="evidence" value="ECO:0007669"/>
    <property type="project" value="UniProtKB-UniRule"/>
</dbReference>
<dbReference type="CDD" id="cd07914">
    <property type="entry name" value="IGPD"/>
    <property type="match status" value="1"/>
</dbReference>
<dbReference type="FunFam" id="3.30.230.40:FF:000001">
    <property type="entry name" value="Imidazoleglycerol-phosphate dehydratase HisB"/>
    <property type="match status" value="1"/>
</dbReference>
<dbReference type="FunFam" id="3.30.230.40:FF:000003">
    <property type="entry name" value="Imidazoleglycerol-phosphate dehydratase HisB"/>
    <property type="match status" value="1"/>
</dbReference>
<dbReference type="Gene3D" id="3.30.230.40">
    <property type="entry name" value="Imidazole glycerol phosphate dehydratase, domain 1"/>
    <property type="match status" value="2"/>
</dbReference>
<dbReference type="HAMAP" id="MF_00076">
    <property type="entry name" value="HisB"/>
    <property type="match status" value="1"/>
</dbReference>
<dbReference type="InterPro" id="IPR038494">
    <property type="entry name" value="IGPD_sf"/>
</dbReference>
<dbReference type="InterPro" id="IPR000807">
    <property type="entry name" value="ImidazoleglycerolP_deHydtase"/>
</dbReference>
<dbReference type="InterPro" id="IPR020565">
    <property type="entry name" value="ImidazoleglycerP_deHydtase_CS"/>
</dbReference>
<dbReference type="InterPro" id="IPR020568">
    <property type="entry name" value="Ribosomal_Su5_D2-typ_SF"/>
</dbReference>
<dbReference type="NCBIfam" id="NF002109">
    <property type="entry name" value="PRK00951.1-5"/>
    <property type="match status" value="1"/>
</dbReference>
<dbReference type="NCBIfam" id="NF002111">
    <property type="entry name" value="PRK00951.2-1"/>
    <property type="match status" value="1"/>
</dbReference>
<dbReference type="NCBIfam" id="NF002114">
    <property type="entry name" value="PRK00951.2-4"/>
    <property type="match status" value="1"/>
</dbReference>
<dbReference type="NCBIfam" id="NF002116">
    <property type="entry name" value="PRK00951.2-6"/>
    <property type="match status" value="1"/>
</dbReference>
<dbReference type="PANTHER" id="PTHR23133:SF2">
    <property type="entry name" value="IMIDAZOLEGLYCEROL-PHOSPHATE DEHYDRATASE"/>
    <property type="match status" value="1"/>
</dbReference>
<dbReference type="PANTHER" id="PTHR23133">
    <property type="entry name" value="IMIDAZOLEGLYCEROL-PHOSPHATE DEHYDRATASE HIS7"/>
    <property type="match status" value="1"/>
</dbReference>
<dbReference type="Pfam" id="PF00475">
    <property type="entry name" value="IGPD"/>
    <property type="match status" value="1"/>
</dbReference>
<dbReference type="SUPFAM" id="SSF54211">
    <property type="entry name" value="Ribosomal protein S5 domain 2-like"/>
    <property type="match status" value="2"/>
</dbReference>
<dbReference type="PROSITE" id="PS00954">
    <property type="entry name" value="IGP_DEHYDRATASE_1"/>
    <property type="match status" value="1"/>
</dbReference>
<dbReference type="PROSITE" id="PS00955">
    <property type="entry name" value="IGP_DEHYDRATASE_2"/>
    <property type="match status" value="1"/>
</dbReference>
<organism>
    <name type="scientific">Methylorubrum extorquens (strain CM4 / NCIMB 13688)</name>
    <name type="common">Methylobacterium extorquens</name>
    <dbReference type="NCBI Taxonomy" id="440085"/>
    <lineage>
        <taxon>Bacteria</taxon>
        <taxon>Pseudomonadati</taxon>
        <taxon>Pseudomonadota</taxon>
        <taxon>Alphaproteobacteria</taxon>
        <taxon>Hyphomicrobiales</taxon>
        <taxon>Methylobacteriaceae</taxon>
        <taxon>Methylorubrum</taxon>
    </lineage>
</organism>
<sequence>MRTASISRRTAETDVSVSIDLDGTGKATIATGVGFLDHMLELFARHGLFDVTIKVEGDLHVDQHHTTEDAGIALGQAVAQALGDKRGIARYADIHLPMDETLSRIAIDISGRPFLVFRTSFRVEKIGQFDTELVREFFQAFAMNAGITLHVETLYGENAHHIAESVFKGLARSLRKAVAIDPREDGRVPSTKGSL</sequence>
<gene>
    <name evidence="1" type="primary">hisB</name>
    <name type="ordered locus">Mchl_2771</name>
</gene>
<accession>B7KPM4</accession>
<name>HIS7_METC4</name>